<protein>
    <recommendedName>
        <fullName>Cation efflux system protein CusC</fullName>
    </recommendedName>
</protein>
<reference key="1">
    <citation type="journal article" date="1999" name="Infect. Immun.">
        <title>Identification and characterization of an Escherichia coli invasion gene locus, ibeB, required for penetration of brain microvascular endothelial cells.</title>
        <authorList>
            <person name="Huang S.-H."/>
            <person name="Chen Y.-H."/>
            <person name="Fu Q."/>
            <person name="Stins M."/>
            <person name="Wang Y."/>
            <person name="Wass C."/>
            <person name="Kim K.S."/>
        </authorList>
    </citation>
    <scope>NUCLEOTIDE SEQUENCE [GENOMIC DNA]</scope>
    <source>
        <strain>K1 / RS218 / O18:K1:H7</strain>
    </source>
</reference>
<reference key="2">
    <citation type="journal article" date="1996" name="DNA Res.">
        <title>A 718-kb DNA sequence of the Escherichia coli K-12 genome corresponding to the 12.7-28.0 min region on the linkage map.</title>
        <authorList>
            <person name="Oshima T."/>
            <person name="Aiba H."/>
            <person name="Baba T."/>
            <person name="Fujita K."/>
            <person name="Hayashi K."/>
            <person name="Honjo A."/>
            <person name="Ikemoto K."/>
            <person name="Inada T."/>
            <person name="Itoh T."/>
            <person name="Kajihara M."/>
            <person name="Kanai K."/>
            <person name="Kashimoto K."/>
            <person name="Kimura S."/>
            <person name="Kitagawa M."/>
            <person name="Makino K."/>
            <person name="Masuda S."/>
            <person name="Miki T."/>
            <person name="Mizobuchi K."/>
            <person name="Mori H."/>
            <person name="Motomura K."/>
            <person name="Nakamura Y."/>
            <person name="Nashimoto H."/>
            <person name="Nishio Y."/>
            <person name="Saito N."/>
            <person name="Sampei G."/>
            <person name="Seki Y."/>
            <person name="Tagami H."/>
            <person name="Takemoto K."/>
            <person name="Wada C."/>
            <person name="Yamamoto Y."/>
            <person name="Yano M."/>
            <person name="Horiuchi T."/>
        </authorList>
    </citation>
    <scope>NUCLEOTIDE SEQUENCE [LARGE SCALE GENOMIC DNA]</scope>
    <source>
        <strain>K12 / W3110 / ATCC 27325 / DSM 5911</strain>
    </source>
</reference>
<reference key="3">
    <citation type="submission" date="1997-01" db="EMBL/GenBank/DDBJ databases">
        <title>Sequence of minutes 4-25 of Escherichia coli.</title>
        <authorList>
            <person name="Chung E."/>
            <person name="Allen E."/>
            <person name="Araujo R."/>
            <person name="Aparicio A.M."/>
            <person name="Davis K."/>
            <person name="Duncan M."/>
            <person name="Federspiel N."/>
            <person name="Hyman R."/>
            <person name="Kalman S."/>
            <person name="Komp C."/>
            <person name="Kurdi O."/>
            <person name="Lew H."/>
            <person name="Lin D."/>
            <person name="Namath A."/>
            <person name="Oefner P."/>
            <person name="Roberts D."/>
            <person name="Schramm S."/>
            <person name="Davis R.W."/>
        </authorList>
    </citation>
    <scope>NUCLEOTIDE SEQUENCE [LARGE SCALE GENOMIC DNA]</scope>
    <source>
        <strain>K12 / MG1655 / ATCC 47076</strain>
    </source>
</reference>
<reference key="4">
    <citation type="journal article" date="1997" name="Science">
        <title>The complete genome sequence of Escherichia coli K-12.</title>
        <authorList>
            <person name="Blattner F.R."/>
            <person name="Plunkett G. III"/>
            <person name="Bloch C.A."/>
            <person name="Perna N.T."/>
            <person name="Burland V."/>
            <person name="Riley M."/>
            <person name="Collado-Vides J."/>
            <person name="Glasner J.D."/>
            <person name="Rode C.K."/>
            <person name="Mayhew G.F."/>
            <person name="Gregor J."/>
            <person name="Davis N.W."/>
            <person name="Kirkpatrick H.A."/>
            <person name="Goeden M.A."/>
            <person name="Rose D.J."/>
            <person name="Mau B."/>
            <person name="Shao Y."/>
        </authorList>
    </citation>
    <scope>NUCLEOTIDE SEQUENCE [LARGE SCALE GENOMIC DNA]</scope>
    <source>
        <strain>K12 / MG1655 / ATCC 47076</strain>
    </source>
</reference>
<reference key="5">
    <citation type="journal article" date="2006" name="Mol. Syst. Biol.">
        <title>Highly accurate genome sequences of Escherichia coli K-12 strains MG1655 and W3110.</title>
        <authorList>
            <person name="Hayashi K."/>
            <person name="Morooka N."/>
            <person name="Yamamoto Y."/>
            <person name="Fujita K."/>
            <person name="Isono K."/>
            <person name="Choi S."/>
            <person name="Ohtsubo E."/>
            <person name="Baba T."/>
            <person name="Wanner B.L."/>
            <person name="Mori H."/>
            <person name="Horiuchi T."/>
        </authorList>
    </citation>
    <scope>NUCLEOTIDE SEQUENCE [LARGE SCALE GENOMIC DNA]</scope>
    <source>
        <strain>K12 / W3110 / ATCC 27325 / DSM 5911</strain>
    </source>
</reference>
<reference key="6">
    <citation type="journal article" date="2000" name="J. Bacteriol.">
        <title>Identification of a copper-responsive two-component system on the chromosome of Escherichia coli K-12.</title>
        <authorList>
            <person name="Munson G.P."/>
            <person name="Lam D.L."/>
            <person name="Outten F.W."/>
            <person name="O'Halloran T.V."/>
        </authorList>
    </citation>
    <scope>NUCLEOTIDE SEQUENCE [GENOMIC DNA] OF 1-340</scope>
    <source>
        <strain>K12 / DH5-alpha</strain>
    </source>
</reference>
<reference key="7">
    <citation type="journal article" date="1999" name="Electrophoresis">
        <title>Enrichment of low abundance proteins of Escherichia coli by hydroxyapatite chromatography.</title>
        <authorList>
            <person name="Fountoulakis M."/>
            <person name="Takacs M.-F."/>
            <person name="Berndt P."/>
            <person name="Langen H."/>
            <person name="Takacs B."/>
        </authorList>
    </citation>
    <scope>IDENTIFICATION BY MASS SPECTROMETRY</scope>
    <source>
        <strain>B / BL21</strain>
    </source>
</reference>
<reference key="8">
    <citation type="journal article" date="2001" name="J. Biol. Chem.">
        <title>The independent cue and cus systems confer copper tolerance during aerobic and anaerobic growth in Escherichia coli.</title>
        <authorList>
            <person name="Outten F.W."/>
            <person name="Huffman D.L."/>
            <person name="Hale J.A."/>
            <person name="O'Halloran T.V."/>
        </authorList>
    </citation>
    <scope>FUNCTION IN COPPER HOMEOSTASIS</scope>
    <source>
        <strain>K12</strain>
    </source>
</reference>
<reference key="9">
    <citation type="journal article" date="2001" name="Microbiology">
        <title>The product of the ybdE gene of the Escherichia coli chromosome is involved in detoxification of silver ions.</title>
        <authorList>
            <person name="Franke S."/>
            <person name="Grass G."/>
            <person name="Nies D.H."/>
        </authorList>
    </citation>
    <scope>INDUCTION</scope>
    <source>
        <strain>K38</strain>
    </source>
</reference>
<reference key="10">
    <citation type="journal article" date="2003" name="J. Bacteriol.">
        <title>Molecular analysis of the copper-transporting efflux system CusCFBA of Escherichia coli.</title>
        <authorList>
            <person name="Franke S."/>
            <person name="Grass G."/>
            <person name="Rensing C."/>
            <person name="Nies D.H."/>
        </authorList>
    </citation>
    <scope>FUNCTION</scope>
    <source>
        <strain>K12 / W3110 / ATCC 27325 / DSM 5911</strain>
    </source>
</reference>
<reference key="11">
    <citation type="journal article" date="2011" name="PLoS ONE">
        <title>Crystal structure of Escherichia coli CusC, the outer membrane component of a heavy metal efflux pump.</title>
        <authorList>
            <person name="Kulathila R."/>
            <person name="Kulathila R."/>
            <person name="Indic M."/>
            <person name="van den Berg B."/>
        </authorList>
    </citation>
    <scope>X-RAY CRYSTALLOGRAPHY (2.30 ANGSTROMS) OF 18-457</scope>
    <scope>FUNCTION</scope>
    <scope>SUBUNIT</scope>
    <scope>SUBCELLULAR LOCATION</scope>
    <scope>PALMITOYLATION AT CYS-18</scope>
    <scope>DIACYLGLYCEROL AT CYS-18</scope>
    <source>
        <strain>K12 / DH5-alpha</strain>
    </source>
</reference>
<sequence>MSPCKLLPFCVALALTGCSLAPDYQRPAMPVPQQFSLSQNGLVNAADNYQNAGWRTFFVDNQVKTLISEALVNNRDLRMATLKVQEARAQYRLTDADRYPQLNGEGSGSWSGNLKGNTATTREFSTGLNASFDLDFFGRLKNMSEAERQNYLATEEAQRAVHILLVSNVAQSYFNQQLAYAQLQIAEETLRNYQQSYAFVEKQLLTGSSNVLALEQARGVIESTRSDIAKRQGELAQANNALQLLLGSYGKLPQAQTVNSDSLQSVKLPAGLSSQILLQRPDIMEAEHALMAANANIGAARAAFFPSISLTSGISTASSDLSSLFNASSGMWNFIPKIEIPIFNAGRNQANLDIAEIRQQQSVVNYEQKIQNAFKEVADALALRQSLNDQISAQQRYLASLQITLQRARALYQHGAVSYLEVLDAERSLFATRQTLLDLNYARQVNEISLYTALGGG</sequence>
<gene>
    <name type="primary">cusC</name>
    <name type="synonym">ibeB</name>
    <name type="synonym">ylcB</name>
    <name type="ordered locus">b0572</name>
    <name type="ordered locus">JW0561</name>
</gene>
<organism>
    <name type="scientific">Escherichia coli (strain K12)</name>
    <dbReference type="NCBI Taxonomy" id="83333"/>
    <lineage>
        <taxon>Bacteria</taxon>
        <taxon>Pseudomonadati</taxon>
        <taxon>Pseudomonadota</taxon>
        <taxon>Gammaproteobacteria</taxon>
        <taxon>Enterobacterales</taxon>
        <taxon>Enterobacteriaceae</taxon>
        <taxon>Escherichia</taxon>
    </lineage>
</organism>
<comment type="function">
    <text evidence="3 4 5">Forms pores that allow passive diffusion of cations across the outer membrane. Part of a cation efflux system that mediates resistance to copper and silver. In pathogenic strains it allows the bacteria to invade brain microvascular endothelial cells (BMEC) thus allowing it to cross the blood-brain barrier and cause neonatal meningitis.</text>
</comment>
<comment type="subunit">
    <text evidence="5">Homotrimer. Component of the cus efflux system composed of CusA, CusB, CusC and CusF.</text>
</comment>
<comment type="subcellular location">
    <subcellularLocation>
        <location evidence="5">Cell outer membrane</location>
        <topology evidence="5">Multi-pass membrane protein</topology>
    </subcellularLocation>
    <subcellularLocation>
        <location evidence="5">Cell outer membrane</location>
        <topology evidence="1 5">Lipid-anchor</topology>
    </subcellularLocation>
</comment>
<comment type="induction">
    <text evidence="2">Transcriptionally regulated by CusR in response to copper and silver ions.</text>
</comment>
<comment type="miscellaneous">
    <text>The cus system plays an important role in copper tolerance under anaerobic growth and, under extreme copper stress, in aerobic growth.</text>
</comment>
<comment type="similarity">
    <text evidence="6">Belongs to the outer membrane factor (OMF) (TC 1.B.17) family.</text>
</comment>
<feature type="signal peptide" evidence="1">
    <location>
        <begin position="1"/>
        <end position="17"/>
    </location>
</feature>
<feature type="chain" id="PRO_0000030992" description="Cation efflux system protein CusC">
    <location>
        <begin position="18"/>
        <end position="457"/>
    </location>
</feature>
<feature type="lipid moiety-binding region" description="N-palmitoyl cysteine" evidence="1 5">
    <location>
        <position position="18"/>
    </location>
</feature>
<feature type="lipid moiety-binding region" description="S-diacylglycerol cysteine" evidence="1 5">
    <location>
        <position position="18"/>
    </location>
</feature>
<feature type="sequence variant" description="In strain: K1 / RS218.">
    <original>L</original>
    <variation>I</variation>
    <location>
        <position position="6"/>
    </location>
</feature>
<feature type="sequence variant" description="In strain: K1 / RS218.">
    <original>L</original>
    <variation>M</variation>
    <location>
        <position position="20"/>
    </location>
</feature>
<feature type="sequence variant" description="In strain: K1 / RS218.">
    <original>P</original>
    <variation>S</variation>
    <location>
        <position position="27"/>
    </location>
</feature>
<feature type="sequence variant" description="In strain: K1 / RS218.">
    <original>Q</original>
    <variation>H</variation>
    <location>
        <position position="33"/>
    </location>
</feature>
<feature type="sequence variant" description="In strain: K1 / RS218.">
    <original>QN</original>
    <variation>RS</variation>
    <location>
        <begin position="50"/>
        <end position="51"/>
    </location>
</feature>
<feature type="sequence variant" description="In strain: K1 / RS218.">
    <original>T</original>
    <variation>A</variation>
    <location>
        <position position="81"/>
    </location>
</feature>
<feature type="sequence variant" description="In strain: K1 / RS218.">
    <original>L</original>
    <variation>F</variation>
    <location>
        <position position="102"/>
    </location>
</feature>
<feature type="sequence variant" description="In strain: K1 / RS218.">
    <original>G</original>
    <variation>D</variation>
    <location>
        <position position="106"/>
    </location>
</feature>
<feature type="sequence variant" description="In strain: K1 / RS218.">
    <original>NT</original>
    <variation>DS</variation>
    <location>
        <begin position="117"/>
        <end position="118"/>
    </location>
</feature>
<feature type="sequence variant" description="In strain: K1 / RS218.">
    <original>S</original>
    <variation>F</variation>
    <location>
        <position position="167"/>
    </location>
</feature>
<feature type="sequence variant" description="In strain: K1 / RS218.">
    <original>R</original>
    <variation>G</variation>
    <location>
        <position position="191"/>
    </location>
</feature>
<feature type="sequence variant" description="In strain: K1 / RS218.">
    <original>Q</original>
    <variation>R</variation>
    <location>
        <position position="232"/>
    </location>
</feature>
<feature type="sequence variant" description="In strain: K1 / RS218.">
    <original>S</original>
    <variation>P</variation>
    <location>
        <position position="273"/>
    </location>
</feature>
<feature type="sequence variant" description="In strain: K1 / RS218.">
    <original>G</original>
    <variation>GWQQ</variation>
    <location>
        <position position="457"/>
    </location>
</feature>
<feature type="strand" evidence="7">
    <location>
        <begin position="33"/>
        <end position="35"/>
    </location>
</feature>
<feature type="helix" evidence="7">
    <location>
        <begin position="54"/>
        <end position="57"/>
    </location>
</feature>
<feature type="helix" evidence="7">
    <location>
        <begin position="61"/>
        <end position="73"/>
    </location>
</feature>
<feature type="helix" evidence="7">
    <location>
        <begin position="75"/>
        <end position="96"/>
    </location>
</feature>
<feature type="strand" evidence="7">
    <location>
        <begin position="101"/>
        <end position="111"/>
    </location>
</feature>
<feature type="strand" evidence="7">
    <location>
        <begin position="114"/>
        <end position="117"/>
    </location>
</feature>
<feature type="strand" evidence="7">
    <location>
        <begin position="121"/>
        <end position="133"/>
    </location>
</feature>
<feature type="helix" evidence="7">
    <location>
        <begin position="139"/>
        <end position="204"/>
    </location>
</feature>
<feature type="turn" evidence="7">
    <location>
        <begin position="205"/>
        <end position="207"/>
    </location>
</feature>
<feature type="helix" evidence="7">
    <location>
        <begin position="211"/>
        <end position="246"/>
    </location>
</feature>
<feature type="helix" evidence="7">
    <location>
        <begin position="260"/>
        <end position="262"/>
    </location>
</feature>
<feature type="helix" evidence="7">
    <location>
        <begin position="274"/>
        <end position="279"/>
    </location>
</feature>
<feature type="helix" evidence="7">
    <location>
        <begin position="281"/>
        <end position="302"/>
    </location>
</feature>
<feature type="strand" evidence="7">
    <location>
        <begin position="307"/>
        <end position="320"/>
    </location>
</feature>
<feature type="helix" evidence="7">
    <location>
        <begin position="321"/>
        <end position="323"/>
    </location>
</feature>
<feature type="helix" evidence="7">
    <location>
        <begin position="327"/>
        <end position="329"/>
    </location>
</feature>
<feature type="strand" evidence="7">
    <location>
        <begin position="330"/>
        <end position="339"/>
    </location>
</feature>
<feature type="helix" evidence="7">
    <location>
        <begin position="347"/>
        <end position="413"/>
    </location>
</feature>
<feature type="helix" evidence="7">
    <location>
        <begin position="419"/>
        <end position="453"/>
    </location>
</feature>
<accession>P77211</accession>
<accession>Q9L5Y3</accession>
<accession>Q9X444</accession>
<dbReference type="EMBL" id="AF094824">
    <property type="protein sequence ID" value="AAD30205.1"/>
    <property type="molecule type" value="Genomic_DNA"/>
</dbReference>
<dbReference type="EMBL" id="U82598">
    <property type="protein sequence ID" value="AAB40770.1"/>
    <property type="molecule type" value="Genomic_DNA"/>
</dbReference>
<dbReference type="EMBL" id="U00096">
    <property type="protein sequence ID" value="AAC73673.1"/>
    <property type="molecule type" value="Genomic_DNA"/>
</dbReference>
<dbReference type="EMBL" id="AP009048">
    <property type="protein sequence ID" value="BAA35206.1"/>
    <property type="molecule type" value="Genomic_DNA"/>
</dbReference>
<dbReference type="EMBL" id="AF245661">
    <property type="protein sequence ID" value="AAF70174.1"/>
    <property type="molecule type" value="Genomic_DNA"/>
</dbReference>
<dbReference type="PIR" id="B64790">
    <property type="entry name" value="B64790"/>
</dbReference>
<dbReference type="RefSeq" id="NP_415104.1">
    <property type="nucleotide sequence ID" value="NC_000913.3"/>
</dbReference>
<dbReference type="RefSeq" id="WP_000074234.1">
    <property type="nucleotide sequence ID" value="NZ_SSZK01000024.1"/>
</dbReference>
<dbReference type="PDB" id="3PIK">
    <property type="method" value="X-ray"/>
    <property type="resolution" value="2.30 A"/>
    <property type="chains" value="A=18-457"/>
</dbReference>
<dbReference type="PDB" id="4K34">
    <property type="method" value="X-ray"/>
    <property type="resolution" value="2.69 A"/>
    <property type="chains" value="A/B=18-457"/>
</dbReference>
<dbReference type="PDB" id="4K7K">
    <property type="method" value="X-ray"/>
    <property type="resolution" value="2.53 A"/>
    <property type="chains" value="A/B=18-457"/>
</dbReference>
<dbReference type="PDB" id="4K7R">
    <property type="method" value="X-ray"/>
    <property type="resolution" value="2.09 A"/>
    <property type="chains" value="A=18-457"/>
</dbReference>
<dbReference type="PDBsum" id="3PIK"/>
<dbReference type="PDBsum" id="4K34"/>
<dbReference type="PDBsum" id="4K7K"/>
<dbReference type="PDBsum" id="4K7R"/>
<dbReference type="SMR" id="P77211"/>
<dbReference type="BioGRID" id="4262822">
    <property type="interactions" value="262"/>
</dbReference>
<dbReference type="ComplexPortal" id="CPX-2254">
    <property type="entry name" value="Cus cation efflux complex"/>
</dbReference>
<dbReference type="DIP" id="DIP-9347N"/>
<dbReference type="FunCoup" id="P77211">
    <property type="interactions" value="371"/>
</dbReference>
<dbReference type="IntAct" id="P77211">
    <property type="interactions" value="1"/>
</dbReference>
<dbReference type="STRING" id="511145.b0572"/>
<dbReference type="TCDB" id="1.B.17.3.5">
    <property type="family name" value="the outer membrane factor (omf) family"/>
</dbReference>
<dbReference type="jPOST" id="P77211"/>
<dbReference type="PaxDb" id="511145-b0572"/>
<dbReference type="EnsemblBacteria" id="AAC73673">
    <property type="protein sequence ID" value="AAC73673"/>
    <property type="gene ID" value="b0572"/>
</dbReference>
<dbReference type="GeneID" id="946288"/>
<dbReference type="KEGG" id="ecj:JW0561"/>
<dbReference type="KEGG" id="eco:b0572"/>
<dbReference type="KEGG" id="ecoc:C3026_02840"/>
<dbReference type="PATRIC" id="fig|1411691.4.peg.1702"/>
<dbReference type="EchoBASE" id="EB3984"/>
<dbReference type="eggNOG" id="COG1538">
    <property type="taxonomic scope" value="Bacteria"/>
</dbReference>
<dbReference type="HOGENOM" id="CLU_012817_13_3_6"/>
<dbReference type="InParanoid" id="P77211"/>
<dbReference type="OMA" id="CVVGPDH"/>
<dbReference type="OrthoDB" id="9770517at2"/>
<dbReference type="PhylomeDB" id="P77211"/>
<dbReference type="BioCyc" id="EcoCyc:G6320-MONOMER"/>
<dbReference type="BioCyc" id="MetaCyc:G6320-MONOMER"/>
<dbReference type="EvolutionaryTrace" id="P77211"/>
<dbReference type="PRO" id="PR:P77211"/>
<dbReference type="Proteomes" id="UP000000625">
    <property type="component" value="Chromosome"/>
</dbReference>
<dbReference type="GO" id="GO:0009279">
    <property type="term" value="C:cell outer membrane"/>
    <property type="evidence" value="ECO:0007669"/>
    <property type="project" value="UniProtKB-SubCell"/>
</dbReference>
<dbReference type="GO" id="GO:0016020">
    <property type="term" value="C:membrane"/>
    <property type="evidence" value="ECO:0000318"/>
    <property type="project" value="GO_Central"/>
</dbReference>
<dbReference type="GO" id="GO:0046930">
    <property type="term" value="C:pore complex"/>
    <property type="evidence" value="ECO:0007669"/>
    <property type="project" value="UniProtKB-KW"/>
</dbReference>
<dbReference type="GO" id="GO:0005507">
    <property type="term" value="F:copper ion binding"/>
    <property type="evidence" value="ECO:0000316"/>
    <property type="project" value="EcoCyc"/>
</dbReference>
<dbReference type="GO" id="GO:0005375">
    <property type="term" value="F:copper ion transmembrane transporter activity"/>
    <property type="evidence" value="ECO:0000316"/>
    <property type="project" value="EcoCyc"/>
</dbReference>
<dbReference type="GO" id="GO:0019992">
    <property type="term" value="F:diacylglycerol binding"/>
    <property type="evidence" value="ECO:0000314"/>
    <property type="project" value="UniProtKB"/>
</dbReference>
<dbReference type="GO" id="GO:0015562">
    <property type="term" value="F:efflux transmembrane transporter activity"/>
    <property type="evidence" value="ECO:0007669"/>
    <property type="project" value="InterPro"/>
</dbReference>
<dbReference type="GO" id="GO:0042802">
    <property type="term" value="F:identical protein binding"/>
    <property type="evidence" value="ECO:0000314"/>
    <property type="project" value="EcoCyc"/>
</dbReference>
<dbReference type="GO" id="GO:0015288">
    <property type="term" value="F:porin activity"/>
    <property type="evidence" value="ECO:0007669"/>
    <property type="project" value="UniProtKB-KW"/>
</dbReference>
<dbReference type="GO" id="GO:0022857">
    <property type="term" value="F:transmembrane transporter activity"/>
    <property type="evidence" value="ECO:0000318"/>
    <property type="project" value="GO_Central"/>
</dbReference>
<dbReference type="GO" id="GO:0060003">
    <property type="term" value="P:copper ion export"/>
    <property type="evidence" value="ECO:0000316"/>
    <property type="project" value="EcoCyc"/>
</dbReference>
<dbReference type="GO" id="GO:0035434">
    <property type="term" value="P:copper ion transmembrane transport"/>
    <property type="evidence" value="ECO:0000303"/>
    <property type="project" value="ComplexPortal"/>
</dbReference>
<dbReference type="GO" id="GO:0010273">
    <property type="term" value="P:detoxification of copper ion"/>
    <property type="evidence" value="ECO:0000316"/>
    <property type="project" value="EcoCyc"/>
</dbReference>
<dbReference type="GO" id="GO:0006878">
    <property type="term" value="P:intracellular copper ion homeostasis"/>
    <property type="evidence" value="ECO:0000316"/>
    <property type="project" value="EcoCyc"/>
</dbReference>
<dbReference type="GO" id="GO:0070207">
    <property type="term" value="P:protein homotrimerization"/>
    <property type="evidence" value="ECO:0000314"/>
    <property type="project" value="UniProtKB"/>
</dbReference>
<dbReference type="GO" id="GO:0046688">
    <property type="term" value="P:response to copper ion"/>
    <property type="evidence" value="ECO:0000315"/>
    <property type="project" value="EcoliWiki"/>
</dbReference>
<dbReference type="GO" id="GO:0010272">
    <property type="term" value="P:response to silver ion"/>
    <property type="evidence" value="ECO:0000315"/>
    <property type="project" value="EcoCyc"/>
</dbReference>
<dbReference type="GO" id="GO:0009636">
    <property type="term" value="P:response to toxic substance"/>
    <property type="evidence" value="ECO:0000303"/>
    <property type="project" value="ComplexPortal"/>
</dbReference>
<dbReference type="GO" id="GO:1902601">
    <property type="term" value="P:silver ion transmembrane transport"/>
    <property type="evidence" value="ECO:0000303"/>
    <property type="project" value="ComplexPortal"/>
</dbReference>
<dbReference type="GO" id="GO:0055085">
    <property type="term" value="P:transmembrane transport"/>
    <property type="evidence" value="ECO:0000318"/>
    <property type="project" value="GO_Central"/>
</dbReference>
<dbReference type="Gene3D" id="1.20.1600.10">
    <property type="entry name" value="Outer membrane efflux proteins (OEP)"/>
    <property type="match status" value="1"/>
</dbReference>
<dbReference type="Gene3D" id="2.20.200.10">
    <property type="entry name" value="Outer membrane efflux proteins (OEP)"/>
    <property type="match status" value="1"/>
</dbReference>
<dbReference type="InterPro" id="IPR050737">
    <property type="entry name" value="OMF"/>
</dbReference>
<dbReference type="InterPro" id="IPR003423">
    <property type="entry name" value="OMP_efflux"/>
</dbReference>
<dbReference type="InterPro" id="IPR010131">
    <property type="entry name" value="RND_efflux_OM_lipoprot_NodT"/>
</dbReference>
<dbReference type="NCBIfam" id="TIGR01845">
    <property type="entry name" value="outer_NodT"/>
    <property type="match status" value="1"/>
</dbReference>
<dbReference type="NCBIfam" id="NF007347">
    <property type="entry name" value="PRK09837.1"/>
    <property type="match status" value="1"/>
</dbReference>
<dbReference type="PANTHER" id="PTHR30203:SF32">
    <property type="entry name" value="CATION EFFLUX SYSTEM PROTEIN CUSC"/>
    <property type="match status" value="1"/>
</dbReference>
<dbReference type="PANTHER" id="PTHR30203">
    <property type="entry name" value="OUTER MEMBRANE CATION EFFLUX PROTEIN"/>
    <property type="match status" value="1"/>
</dbReference>
<dbReference type="Pfam" id="PF02321">
    <property type="entry name" value="OEP"/>
    <property type="match status" value="2"/>
</dbReference>
<dbReference type="SUPFAM" id="SSF56954">
    <property type="entry name" value="Outer membrane efflux proteins (OEP)"/>
    <property type="match status" value="1"/>
</dbReference>
<dbReference type="PROSITE" id="PS51257">
    <property type="entry name" value="PROKAR_LIPOPROTEIN"/>
    <property type="match status" value="1"/>
</dbReference>
<name>CUSC_ECOLI</name>
<evidence type="ECO:0000255" key="1">
    <source>
        <dbReference type="PROSITE-ProRule" id="PRU00303"/>
    </source>
</evidence>
<evidence type="ECO:0000269" key="2">
    <source>
    </source>
</evidence>
<evidence type="ECO:0000269" key="3">
    <source>
    </source>
</evidence>
<evidence type="ECO:0000269" key="4">
    <source>
    </source>
</evidence>
<evidence type="ECO:0000269" key="5">
    <source>
    </source>
</evidence>
<evidence type="ECO:0000305" key="6"/>
<evidence type="ECO:0007829" key="7">
    <source>
        <dbReference type="PDB" id="4K7R"/>
    </source>
</evidence>
<keyword id="KW-0002">3D-structure</keyword>
<keyword id="KW-0998">Cell outer membrane</keyword>
<keyword id="KW-0406">Ion transport</keyword>
<keyword id="KW-0449">Lipoprotein</keyword>
<keyword id="KW-0472">Membrane</keyword>
<keyword id="KW-0564">Palmitate</keyword>
<keyword id="KW-0626">Porin</keyword>
<keyword id="KW-1185">Reference proteome</keyword>
<keyword id="KW-0732">Signal</keyword>
<keyword id="KW-0812">Transmembrane</keyword>
<keyword id="KW-1134">Transmembrane beta strand</keyword>
<keyword id="KW-0813">Transport</keyword>
<proteinExistence type="evidence at protein level"/>